<gene>
    <name evidence="1" type="primary">yjjB</name>
    <name type="ordered locus">SFV_4394</name>
</gene>
<feature type="chain" id="PRO_0000293679" description="Probable succinate transporter subunit YjjB">
    <location>
        <begin position="1"/>
        <end position="157"/>
    </location>
</feature>
<feature type="transmembrane region" description="Helical" evidence="1">
    <location>
        <begin position="8"/>
        <end position="28"/>
    </location>
</feature>
<feature type="transmembrane region" description="Helical" evidence="1">
    <location>
        <begin position="50"/>
        <end position="70"/>
    </location>
</feature>
<feature type="transmembrane region" description="Helical" evidence="1">
    <location>
        <begin position="87"/>
        <end position="107"/>
    </location>
</feature>
<feature type="transmembrane region" description="Helical" evidence="1">
    <location>
        <begin position="129"/>
        <end position="149"/>
    </location>
</feature>
<keyword id="KW-0997">Cell inner membrane</keyword>
<keyword id="KW-1003">Cell membrane</keyword>
<keyword id="KW-0472">Membrane</keyword>
<keyword id="KW-0812">Transmembrane</keyword>
<keyword id="KW-1133">Transmembrane helix</keyword>
<keyword id="KW-0813">Transport</keyword>
<organism>
    <name type="scientific">Shigella flexneri serotype 5b (strain 8401)</name>
    <dbReference type="NCBI Taxonomy" id="373384"/>
    <lineage>
        <taxon>Bacteria</taxon>
        <taxon>Pseudomonadati</taxon>
        <taxon>Pseudomonadota</taxon>
        <taxon>Gammaproteobacteria</taxon>
        <taxon>Enterobacterales</taxon>
        <taxon>Enterobacteriaceae</taxon>
        <taxon>Shigella</taxon>
    </lineage>
</organism>
<comment type="function">
    <text evidence="1">Involved in succinate export with YjjP. Both proteins are required for export.</text>
</comment>
<comment type="subunit">
    <text evidence="1">The transporter is composed of YjjB and YjjP.</text>
</comment>
<comment type="subcellular location">
    <subcellularLocation>
        <location evidence="1">Cell inner membrane</location>
        <topology evidence="1">Multi-pass membrane protein</topology>
    </subcellularLocation>
</comment>
<comment type="similarity">
    <text evidence="1">Belongs to the ThrE exporter (TC 2.A.79) family.</text>
</comment>
<reference key="1">
    <citation type="journal article" date="2006" name="BMC Genomics">
        <title>Complete genome sequence of Shigella flexneri 5b and comparison with Shigella flexneri 2a.</title>
        <authorList>
            <person name="Nie H."/>
            <person name="Yang F."/>
            <person name="Zhang X."/>
            <person name="Yang J."/>
            <person name="Chen L."/>
            <person name="Wang J."/>
            <person name="Xiong Z."/>
            <person name="Peng J."/>
            <person name="Sun L."/>
            <person name="Dong J."/>
            <person name="Xue Y."/>
            <person name="Xu X."/>
            <person name="Chen S."/>
            <person name="Yao Z."/>
            <person name="Shen Y."/>
            <person name="Jin Q."/>
        </authorList>
    </citation>
    <scope>NUCLEOTIDE SEQUENCE [LARGE SCALE GENOMIC DNA]</scope>
    <source>
        <strain>8401</strain>
    </source>
</reference>
<proteinExistence type="inferred from homology"/>
<protein>
    <recommendedName>
        <fullName evidence="1">Probable succinate transporter subunit YjjB</fullName>
    </recommendedName>
</protein>
<evidence type="ECO:0000255" key="1">
    <source>
        <dbReference type="HAMAP-Rule" id="MF_01191"/>
    </source>
</evidence>
<name>YJJB_SHIF8</name>
<sequence>MGVIEFLLALAQDMILAAIPAVGFAMVFNVPVRALRWCALLGSIGHGSRMILMTSGLNIEWSTFMASMLVGTIGIQWSRWYLAHPKVFTVAAVIPMFPGISAYTAMISSVKISQLGYSEPLMITLLTNFLTASSIVGALSIGLSIPGLWLYRKRPRV</sequence>
<accession>Q0SX48</accession>
<dbReference type="EMBL" id="CP000266">
    <property type="protein sequence ID" value="ABF06367.1"/>
    <property type="molecule type" value="Genomic_DNA"/>
</dbReference>
<dbReference type="RefSeq" id="WP_000538192.1">
    <property type="nucleotide sequence ID" value="NC_008258.1"/>
</dbReference>
<dbReference type="KEGG" id="sfv:SFV_4394"/>
<dbReference type="HOGENOM" id="CLU_117642_1_0_6"/>
<dbReference type="Proteomes" id="UP000000659">
    <property type="component" value="Chromosome"/>
</dbReference>
<dbReference type="GO" id="GO:0005886">
    <property type="term" value="C:plasma membrane"/>
    <property type="evidence" value="ECO:0007669"/>
    <property type="project" value="UniProtKB-SubCell"/>
</dbReference>
<dbReference type="GO" id="GO:0015744">
    <property type="term" value="P:succinate transport"/>
    <property type="evidence" value="ECO:0007669"/>
    <property type="project" value="UniProtKB-UniRule"/>
</dbReference>
<dbReference type="HAMAP" id="MF_01191">
    <property type="entry name" value="YjjB"/>
    <property type="match status" value="1"/>
</dbReference>
<dbReference type="InterPro" id="IPR024528">
    <property type="entry name" value="ThrE_2"/>
</dbReference>
<dbReference type="InterPro" id="IPR050539">
    <property type="entry name" value="ThrE_Dicarb/AminoAcid_Exp"/>
</dbReference>
<dbReference type="InterPro" id="IPR020914">
    <property type="entry name" value="YjjB"/>
</dbReference>
<dbReference type="NCBIfam" id="NF007391">
    <property type="entry name" value="PRK09917.1"/>
    <property type="match status" value="1"/>
</dbReference>
<dbReference type="PANTHER" id="PTHR34390:SF1">
    <property type="entry name" value="SUCCINATE TRANSPORTER SUBUNIT YJJB-RELATED"/>
    <property type="match status" value="1"/>
</dbReference>
<dbReference type="PANTHER" id="PTHR34390">
    <property type="entry name" value="UPF0442 PROTEIN YJJB-RELATED"/>
    <property type="match status" value="1"/>
</dbReference>
<dbReference type="Pfam" id="PF12821">
    <property type="entry name" value="ThrE_2"/>
    <property type="match status" value="1"/>
</dbReference>